<dbReference type="EC" id="1.3.5.1" evidence="1"/>
<dbReference type="EMBL" id="AE000516">
    <property type="protein sequence ID" value="AAK45870.1"/>
    <property type="molecule type" value="Genomic_DNA"/>
</dbReference>
<dbReference type="PIR" id="E70762">
    <property type="entry name" value="E70762"/>
</dbReference>
<dbReference type="RefSeq" id="WP_003898925.1">
    <property type="nucleotide sequence ID" value="NZ_KK341227.1"/>
</dbReference>
<dbReference type="SMR" id="P9WN90"/>
<dbReference type="GeneID" id="45425535"/>
<dbReference type="KEGG" id="mtc:MT1603"/>
<dbReference type="PATRIC" id="fig|83331.31.peg.1725"/>
<dbReference type="HOGENOM" id="CLU_014312_6_2_11"/>
<dbReference type="Proteomes" id="UP000001020">
    <property type="component" value="Chromosome"/>
</dbReference>
<dbReference type="GO" id="GO:0005886">
    <property type="term" value="C:plasma membrane"/>
    <property type="evidence" value="ECO:0007669"/>
    <property type="project" value="UniProtKB-SubCell"/>
</dbReference>
<dbReference type="GO" id="GO:0009055">
    <property type="term" value="F:electron transfer activity"/>
    <property type="evidence" value="ECO:0007669"/>
    <property type="project" value="TreeGrafter"/>
</dbReference>
<dbReference type="GO" id="GO:0050660">
    <property type="term" value="F:flavin adenine dinucleotide binding"/>
    <property type="evidence" value="ECO:0007669"/>
    <property type="project" value="InterPro"/>
</dbReference>
<dbReference type="GO" id="GO:0033765">
    <property type="term" value="F:steroid dehydrogenase activity, acting on the CH-CH group of donors"/>
    <property type="evidence" value="ECO:0007669"/>
    <property type="project" value="UniProtKB-ARBA"/>
</dbReference>
<dbReference type="GO" id="GO:0008177">
    <property type="term" value="F:succinate dehydrogenase (quinone) activity"/>
    <property type="evidence" value="ECO:0007669"/>
    <property type="project" value="RHEA"/>
</dbReference>
<dbReference type="GO" id="GO:0009061">
    <property type="term" value="P:anaerobic respiration"/>
    <property type="evidence" value="ECO:0007669"/>
    <property type="project" value="InterPro"/>
</dbReference>
<dbReference type="GO" id="GO:0022900">
    <property type="term" value="P:electron transport chain"/>
    <property type="evidence" value="ECO:0007669"/>
    <property type="project" value="InterPro"/>
</dbReference>
<dbReference type="FunFam" id="3.90.700.10:FF:000003">
    <property type="entry name" value="Fumarate reductase flavoprotein subunit"/>
    <property type="match status" value="1"/>
</dbReference>
<dbReference type="FunFam" id="4.10.80.40:FF:000003">
    <property type="entry name" value="Fumarate reductase flavoprotein subunit"/>
    <property type="match status" value="1"/>
</dbReference>
<dbReference type="FunFam" id="1.20.58.100:FF:000001">
    <property type="entry name" value="Succinate dehydrogenase flavoprotein subunit (SdhA)"/>
    <property type="match status" value="1"/>
</dbReference>
<dbReference type="Gene3D" id="3.50.50.60">
    <property type="entry name" value="FAD/NAD(P)-binding domain"/>
    <property type="match status" value="1"/>
</dbReference>
<dbReference type="Gene3D" id="1.20.58.100">
    <property type="entry name" value="Fumarate reductase/succinate dehydrogenase flavoprotein-like, C-terminal domain"/>
    <property type="match status" value="1"/>
</dbReference>
<dbReference type="Gene3D" id="4.10.80.40">
    <property type="entry name" value="succinate dehydrogenase protein domain"/>
    <property type="match status" value="1"/>
</dbReference>
<dbReference type="Gene3D" id="3.90.700.10">
    <property type="entry name" value="Succinate dehydrogenase/fumarate reductase flavoprotein, catalytic domain"/>
    <property type="match status" value="1"/>
</dbReference>
<dbReference type="InterPro" id="IPR003953">
    <property type="entry name" value="FAD-dep_OxRdtase_2_FAD-bd"/>
</dbReference>
<dbReference type="InterPro" id="IPR036188">
    <property type="entry name" value="FAD/NAD-bd_sf"/>
</dbReference>
<dbReference type="InterPro" id="IPR003952">
    <property type="entry name" value="FRD_SDH_FAD_BS"/>
</dbReference>
<dbReference type="InterPro" id="IPR037099">
    <property type="entry name" value="Fum_R/Succ_DH_flav-like_C_sf"/>
</dbReference>
<dbReference type="InterPro" id="IPR015939">
    <property type="entry name" value="Fum_Rdtase/Succ_DH_flav-like_C"/>
</dbReference>
<dbReference type="InterPro" id="IPR005884">
    <property type="entry name" value="Fum_red_fp"/>
</dbReference>
<dbReference type="InterPro" id="IPR030664">
    <property type="entry name" value="SdhA/FrdA/AprA"/>
</dbReference>
<dbReference type="InterPro" id="IPR027477">
    <property type="entry name" value="Succ_DH/fumarate_Rdtase_cat_sf"/>
</dbReference>
<dbReference type="InterPro" id="IPR014006">
    <property type="entry name" value="Succ_Dhase_FrdA_Gneg"/>
</dbReference>
<dbReference type="NCBIfam" id="TIGR01176">
    <property type="entry name" value="fum_red_Fp"/>
    <property type="match status" value="1"/>
</dbReference>
<dbReference type="NCBIfam" id="NF006686">
    <property type="entry name" value="PRK09231.1"/>
    <property type="match status" value="1"/>
</dbReference>
<dbReference type="NCBIfam" id="TIGR01812">
    <property type="entry name" value="sdhA_frdA_Gneg"/>
    <property type="match status" value="1"/>
</dbReference>
<dbReference type="PANTHER" id="PTHR11632:SF82">
    <property type="entry name" value="FUMARATE REDUCTASE FLAVOPROTEIN SUBUNIT"/>
    <property type="match status" value="1"/>
</dbReference>
<dbReference type="PANTHER" id="PTHR11632">
    <property type="entry name" value="SUCCINATE DEHYDROGENASE 2 FLAVOPROTEIN SUBUNIT"/>
    <property type="match status" value="1"/>
</dbReference>
<dbReference type="Pfam" id="PF00890">
    <property type="entry name" value="FAD_binding_2"/>
    <property type="match status" value="1"/>
</dbReference>
<dbReference type="Pfam" id="PF02910">
    <property type="entry name" value="Succ_DH_flav_C"/>
    <property type="match status" value="1"/>
</dbReference>
<dbReference type="PIRSF" id="PIRSF000171">
    <property type="entry name" value="SDHA_APRA_LASPO"/>
    <property type="match status" value="1"/>
</dbReference>
<dbReference type="PRINTS" id="PR00368">
    <property type="entry name" value="FADPNR"/>
</dbReference>
<dbReference type="SUPFAM" id="SSF51905">
    <property type="entry name" value="FAD/NAD(P)-binding domain"/>
    <property type="match status" value="1"/>
</dbReference>
<dbReference type="SUPFAM" id="SSF46977">
    <property type="entry name" value="Succinate dehydrogenase/fumarate reductase flavoprotein C-terminal domain"/>
    <property type="match status" value="1"/>
</dbReference>
<dbReference type="SUPFAM" id="SSF56425">
    <property type="entry name" value="Succinate dehydrogenase/fumarate reductase flavoprotein, catalytic domain"/>
    <property type="match status" value="1"/>
</dbReference>
<dbReference type="PROSITE" id="PS00504">
    <property type="entry name" value="FRD_SDH_FAD_BINDING"/>
    <property type="match status" value="1"/>
</dbReference>
<sequence length="583" mass="63763">MTAQHNIVVIGGGGAGLRAAIAIAETNPHLDVAIVSKVYPMRSHTVSAEGGAAAVTGDDDSLDEHAHDTVSGGDWLCDQDAVEAFVAEAPKELVQLEHWGCPWSRKPDGRVAVRPFGGMKKLRTWFAADKTGFHLLHTLFQRLLTYSDVMRYDEWFATTLLVDDGRVCGLVAIELATGRIETILADAVILCTGGCGRVFPFTTNANIKTGDGMALAFRAGAPLKDMEFVQYHPTGLPFTGILITEAARAEGGWLLNKDGYRYLQDYDLGKPTPEPRLRSMELGPRDRLSQAFVHEHNKGRTVDTPYGPVVYLDLRHLGADLIDAKLPFVRELCRDYQHIDPVVELVPVRPVVHYMMGGVHTDINGATTLPGLYAAGETACVSINGANRLGSNSLPELLVFGARAGRAAADYAARHQKSDRGPSSAVRAQARTEALRLERELSRHGQGGERIADIRADMQATLESAAGIYRDGPTLTKAVEEIRVLQERFATAGIDDHSRTFNTELTALLELSGMLDVALAIVESGLRREESRGAHQRTDFPNRDDEHFLAHTLVHRESDGTLRVGYLPVTITRWPPGERVYGR</sequence>
<protein>
    <recommendedName>
        <fullName>Fumarate reductase flavoprotein subunit</fullName>
        <ecNumber evidence="1">1.3.5.1</ecNumber>
    </recommendedName>
    <alternativeName>
        <fullName evidence="2">Quinol-fumarate reductase flavoprotein subunit</fullName>
        <shortName evidence="2">QFR flavoprotein subunit</shortName>
    </alternativeName>
</protein>
<evidence type="ECO:0000250" key="1">
    <source>
        <dbReference type="UniProtKB" id="P00363"/>
    </source>
</evidence>
<evidence type="ECO:0000305" key="2"/>
<proteinExistence type="inferred from homology"/>
<organism>
    <name type="scientific">Mycobacterium tuberculosis (strain CDC 1551 / Oshkosh)</name>
    <dbReference type="NCBI Taxonomy" id="83331"/>
    <lineage>
        <taxon>Bacteria</taxon>
        <taxon>Bacillati</taxon>
        <taxon>Actinomycetota</taxon>
        <taxon>Actinomycetes</taxon>
        <taxon>Mycobacteriales</taxon>
        <taxon>Mycobacteriaceae</taxon>
        <taxon>Mycobacterium</taxon>
        <taxon>Mycobacterium tuberculosis complex</taxon>
    </lineage>
</organism>
<gene>
    <name type="primary">frdA</name>
    <name type="ordered locus">MT1603</name>
</gene>
<name>FRDA_MYCTO</name>
<comment type="catalytic activity">
    <reaction evidence="1">
        <text>a quinone + succinate = fumarate + a quinol</text>
        <dbReference type="Rhea" id="RHEA:40523"/>
        <dbReference type="ChEBI" id="CHEBI:24646"/>
        <dbReference type="ChEBI" id="CHEBI:29806"/>
        <dbReference type="ChEBI" id="CHEBI:30031"/>
        <dbReference type="ChEBI" id="CHEBI:132124"/>
        <dbReference type="EC" id="1.3.5.1"/>
    </reaction>
</comment>
<comment type="catalytic activity">
    <reaction evidence="1">
        <text>a menaquinone + succinate = a menaquinol + fumarate</text>
        <dbReference type="Rhea" id="RHEA:27834"/>
        <dbReference type="Rhea" id="RHEA-COMP:9537"/>
        <dbReference type="Rhea" id="RHEA-COMP:9539"/>
        <dbReference type="ChEBI" id="CHEBI:16374"/>
        <dbReference type="ChEBI" id="CHEBI:18151"/>
        <dbReference type="ChEBI" id="CHEBI:29806"/>
        <dbReference type="ChEBI" id="CHEBI:30031"/>
        <dbReference type="EC" id="1.3.5.1"/>
    </reaction>
</comment>
<comment type="cofactor">
    <cofactor evidence="1">
        <name>FAD</name>
        <dbReference type="ChEBI" id="CHEBI:57692"/>
    </cofactor>
    <text evidence="1">Binds 1 FAD covalently per subunit.</text>
</comment>
<comment type="subunit">
    <text evidence="1">Part of an enzyme complex containing four subunits: a flavoprotein (FrdA), an iron-sulfur protein (FrdB), and two hydrophobic anchor proteins (FrdC and FrdD).</text>
</comment>
<comment type="subcellular location">
    <subcellularLocation>
        <location evidence="1">Cell membrane</location>
        <topology evidence="1">Peripheral membrane protein</topology>
        <orientation evidence="1">Cytoplasmic side</orientation>
    </subcellularLocation>
</comment>
<comment type="similarity">
    <text evidence="2">Belongs to the FAD-dependent oxidoreductase 2 family. FRD/SDH subfamily.</text>
</comment>
<feature type="chain" id="PRO_0000427168" description="Fumarate reductase flavoprotein subunit">
    <location>
        <begin position="1"/>
        <end position="583"/>
    </location>
</feature>
<feature type="active site" evidence="1">
    <location>
        <position position="232"/>
    </location>
</feature>
<feature type="active site" evidence="1">
    <location>
        <position position="248"/>
    </location>
</feature>
<feature type="binding site" evidence="1">
    <location>
        <begin position="11"/>
        <end position="15"/>
    </location>
    <ligand>
        <name>FAD</name>
        <dbReference type="ChEBI" id="CHEBI:57692"/>
    </ligand>
</feature>
<feature type="binding site" evidence="1">
    <location>
        <begin position="35"/>
        <end position="37"/>
    </location>
    <ligand>
        <name>FAD</name>
        <dbReference type="ChEBI" id="CHEBI:57692"/>
    </ligand>
</feature>
<feature type="binding site" evidence="1">
    <location>
        <begin position="43"/>
        <end position="51"/>
    </location>
    <ligand>
        <name>FAD</name>
        <dbReference type="ChEBI" id="CHEBI:57692"/>
    </ligand>
</feature>
<feature type="binding site" evidence="1">
    <location>
        <begin position="155"/>
        <end position="157"/>
    </location>
    <ligand>
        <name>FAD</name>
        <dbReference type="ChEBI" id="CHEBI:57692"/>
    </ligand>
</feature>
<feature type="binding site" evidence="1">
    <location>
        <position position="211"/>
    </location>
    <ligand>
        <name>FAD</name>
        <dbReference type="ChEBI" id="CHEBI:57692"/>
    </ligand>
</feature>
<feature type="binding site" evidence="1">
    <location>
        <begin position="353"/>
        <end position="354"/>
    </location>
    <ligand>
        <name>FAD</name>
        <dbReference type="ChEBI" id="CHEBI:57692"/>
    </ligand>
</feature>
<feature type="binding site" evidence="1">
    <location>
        <position position="377"/>
    </location>
    <ligand>
        <name>FAD</name>
        <dbReference type="ChEBI" id="CHEBI:57692"/>
    </ligand>
</feature>
<feature type="binding site" evidence="1">
    <location>
        <begin position="388"/>
        <end position="394"/>
    </location>
    <ligand>
        <name>FAD</name>
        <dbReference type="ChEBI" id="CHEBI:57692"/>
    </ligand>
</feature>
<feature type="modified residue" description="Tele-8alpha-FAD histidine" evidence="1">
    <location>
        <position position="44"/>
    </location>
</feature>
<keyword id="KW-1003">Cell membrane</keyword>
<keyword id="KW-0249">Electron transport</keyword>
<keyword id="KW-0274">FAD</keyword>
<keyword id="KW-0285">Flavoprotein</keyword>
<keyword id="KW-0472">Membrane</keyword>
<keyword id="KW-0547">Nucleotide-binding</keyword>
<keyword id="KW-0560">Oxidoreductase</keyword>
<keyword id="KW-1185">Reference proteome</keyword>
<keyword id="KW-0813">Transport</keyword>
<accession>P9WN90</accession>
<accession>L0T702</accession>
<accession>P64174</accession>
<accession>Q10760</accession>
<reference key="1">
    <citation type="journal article" date="2002" name="J. Bacteriol.">
        <title>Whole-genome comparison of Mycobacterium tuberculosis clinical and laboratory strains.</title>
        <authorList>
            <person name="Fleischmann R.D."/>
            <person name="Alland D."/>
            <person name="Eisen J.A."/>
            <person name="Carpenter L."/>
            <person name="White O."/>
            <person name="Peterson J.D."/>
            <person name="DeBoy R.T."/>
            <person name="Dodson R.J."/>
            <person name="Gwinn M.L."/>
            <person name="Haft D.H."/>
            <person name="Hickey E.K."/>
            <person name="Kolonay J.F."/>
            <person name="Nelson W.C."/>
            <person name="Umayam L.A."/>
            <person name="Ermolaeva M.D."/>
            <person name="Salzberg S.L."/>
            <person name="Delcher A."/>
            <person name="Utterback T.R."/>
            <person name="Weidman J.F."/>
            <person name="Khouri H.M."/>
            <person name="Gill J."/>
            <person name="Mikula A."/>
            <person name="Bishai W."/>
            <person name="Jacobs W.R. Jr."/>
            <person name="Venter J.C."/>
            <person name="Fraser C.M."/>
        </authorList>
    </citation>
    <scope>NUCLEOTIDE SEQUENCE [LARGE SCALE GENOMIC DNA]</scope>
    <source>
        <strain>CDC 1551 / Oshkosh</strain>
    </source>
</reference>